<organism>
    <name type="scientific">Drosophila melanogaster</name>
    <name type="common">Fruit fly</name>
    <dbReference type="NCBI Taxonomy" id="7227"/>
    <lineage>
        <taxon>Eukaryota</taxon>
        <taxon>Metazoa</taxon>
        <taxon>Ecdysozoa</taxon>
        <taxon>Arthropoda</taxon>
        <taxon>Hexapoda</taxon>
        <taxon>Insecta</taxon>
        <taxon>Pterygota</taxon>
        <taxon>Neoptera</taxon>
        <taxon>Endopterygota</taxon>
        <taxon>Diptera</taxon>
        <taxon>Brachycera</taxon>
        <taxon>Muscomorpha</taxon>
        <taxon>Ephydroidea</taxon>
        <taxon>Drosophilidae</taxon>
        <taxon>Drosophila</taxon>
        <taxon>Sophophora</taxon>
    </lineage>
</organism>
<sequence>METILNTQFDQLQKAIEGIKEAKSKGQSTDEARIATTLMFVALKHANREVKHKIKAGRDKLHLEKCKVDLSRLQLQNLLYEVSHLKKEIVRCQKFKSRDTSLELLSEAEYSSELPDMPNDAEELSSHKQHLHRLDCELRLRKALDKQYSALLSSKQELLQDNLSHAQRYVSFAPALRTLQSATKPLHDALQLSLDVEWKLSAVVKYLPKPLYVLFIVLQSLQRVSEEQSFTAEVVGYESEAQMQELLKEKKCSTLNYRQTKKESGDREKIADKNNLDDSLAPHPLHICLTIGAAGSNQLVLQIRYFDFIKCATVWGQLNCSRNANGQGDTNFVHHLLRHLYPNDLGNELPIPGIQYELRSSDLTAEECVRYLKAKDYGKPFCWLQSMCSIATVNSSMLYKHELNLNKNNKEIIDRIARRLNSWQRLSQQIRGLTFKDIDLYSLQENIYPAGLSCSLVQWTAITHEELHSQISDALNSSSADKGITYNSYRAVIVRGSAKMECFIRIPSNYPLEMPLWILNVHWNGCLTAQNNSAIKMMEFWTNSLQPKHLEPNDCILYAQLFRTIYSFDIFLETEGSMQNTIEYNKEKPYISAFAKRSRSRPYKYIKKGSVYAFKQ</sequence>
<evidence type="ECO:0000250" key="1"/>
<evidence type="ECO:0000269" key="2">
    <source>
    </source>
</evidence>
<evidence type="ECO:0000269" key="3">
    <source>
    </source>
</evidence>
<evidence type="ECO:0000269" key="4">
    <source>
    </source>
</evidence>
<evidence type="ECO:0000269" key="5">
    <source>
    </source>
</evidence>
<evidence type="ECO:0000305" key="6"/>
<keyword id="KW-0963">Cytoplasm</keyword>
<keyword id="KW-0472">Membrane</keyword>
<keyword id="KW-0539">Nucleus</keyword>
<keyword id="KW-0597">Phosphoprotein</keyword>
<keyword id="KW-1185">Reference proteome</keyword>
<gene>
    <name type="primary">thoc5</name>
    <name type="ORF">CG2980</name>
</gene>
<name>THOC5_DROME</name>
<reference key="1">
    <citation type="journal article" date="2004" name="Nat. Struct. Mol. Biol.">
        <title>Genome-wide analysis of mRNAs regulated by the THO complex in Drosophila.</title>
        <authorList>
            <person name="Rehwinkel J."/>
            <person name="Herold A."/>
            <person name="Gari K."/>
            <person name="Koecher T."/>
            <person name="Rode M."/>
            <person name="Ciccarelli F.L."/>
            <person name="Wilm M."/>
            <person name="Izaurralde E."/>
        </authorList>
    </citation>
    <scope>NUCLEOTIDE SEQUENCE [MRNA]</scope>
    <scope>FUNCTION</scope>
    <scope>IDENTIFICATION IN THE THO COMPLEX</scope>
</reference>
<reference key="2">
    <citation type="journal article" date="2000" name="Science">
        <title>The genome sequence of Drosophila melanogaster.</title>
        <authorList>
            <person name="Adams M.D."/>
            <person name="Celniker S.E."/>
            <person name="Holt R.A."/>
            <person name="Evans C.A."/>
            <person name="Gocayne J.D."/>
            <person name="Amanatides P.G."/>
            <person name="Scherer S.E."/>
            <person name="Li P.W."/>
            <person name="Hoskins R.A."/>
            <person name="Galle R.F."/>
            <person name="George R.A."/>
            <person name="Lewis S.E."/>
            <person name="Richards S."/>
            <person name="Ashburner M."/>
            <person name="Henderson S.N."/>
            <person name="Sutton G.G."/>
            <person name="Wortman J.R."/>
            <person name="Yandell M.D."/>
            <person name="Zhang Q."/>
            <person name="Chen L.X."/>
            <person name="Brandon R.C."/>
            <person name="Rogers Y.-H.C."/>
            <person name="Blazej R.G."/>
            <person name="Champe M."/>
            <person name="Pfeiffer B.D."/>
            <person name="Wan K.H."/>
            <person name="Doyle C."/>
            <person name="Baxter E.G."/>
            <person name="Helt G."/>
            <person name="Nelson C.R."/>
            <person name="Miklos G.L.G."/>
            <person name="Abril J.F."/>
            <person name="Agbayani A."/>
            <person name="An H.-J."/>
            <person name="Andrews-Pfannkoch C."/>
            <person name="Baldwin D."/>
            <person name="Ballew R.M."/>
            <person name="Basu A."/>
            <person name="Baxendale J."/>
            <person name="Bayraktaroglu L."/>
            <person name="Beasley E.M."/>
            <person name="Beeson K.Y."/>
            <person name="Benos P.V."/>
            <person name="Berman B.P."/>
            <person name="Bhandari D."/>
            <person name="Bolshakov S."/>
            <person name="Borkova D."/>
            <person name="Botchan M.R."/>
            <person name="Bouck J."/>
            <person name="Brokstein P."/>
            <person name="Brottier P."/>
            <person name="Burtis K.C."/>
            <person name="Busam D.A."/>
            <person name="Butler H."/>
            <person name="Cadieu E."/>
            <person name="Center A."/>
            <person name="Chandra I."/>
            <person name="Cherry J.M."/>
            <person name="Cawley S."/>
            <person name="Dahlke C."/>
            <person name="Davenport L.B."/>
            <person name="Davies P."/>
            <person name="de Pablos B."/>
            <person name="Delcher A."/>
            <person name="Deng Z."/>
            <person name="Mays A.D."/>
            <person name="Dew I."/>
            <person name="Dietz S.M."/>
            <person name="Dodson K."/>
            <person name="Doup L.E."/>
            <person name="Downes M."/>
            <person name="Dugan-Rocha S."/>
            <person name="Dunkov B.C."/>
            <person name="Dunn P."/>
            <person name="Durbin K.J."/>
            <person name="Evangelista C.C."/>
            <person name="Ferraz C."/>
            <person name="Ferriera S."/>
            <person name="Fleischmann W."/>
            <person name="Fosler C."/>
            <person name="Gabrielian A.E."/>
            <person name="Garg N.S."/>
            <person name="Gelbart W.M."/>
            <person name="Glasser K."/>
            <person name="Glodek A."/>
            <person name="Gong F."/>
            <person name="Gorrell J.H."/>
            <person name="Gu Z."/>
            <person name="Guan P."/>
            <person name="Harris M."/>
            <person name="Harris N.L."/>
            <person name="Harvey D.A."/>
            <person name="Heiman T.J."/>
            <person name="Hernandez J.R."/>
            <person name="Houck J."/>
            <person name="Hostin D."/>
            <person name="Houston K.A."/>
            <person name="Howland T.J."/>
            <person name="Wei M.-H."/>
            <person name="Ibegwam C."/>
            <person name="Jalali M."/>
            <person name="Kalush F."/>
            <person name="Karpen G.H."/>
            <person name="Ke Z."/>
            <person name="Kennison J.A."/>
            <person name="Ketchum K.A."/>
            <person name="Kimmel B.E."/>
            <person name="Kodira C.D."/>
            <person name="Kraft C.L."/>
            <person name="Kravitz S."/>
            <person name="Kulp D."/>
            <person name="Lai Z."/>
            <person name="Lasko P."/>
            <person name="Lei Y."/>
            <person name="Levitsky A.A."/>
            <person name="Li J.H."/>
            <person name="Li Z."/>
            <person name="Liang Y."/>
            <person name="Lin X."/>
            <person name="Liu X."/>
            <person name="Mattei B."/>
            <person name="McIntosh T.C."/>
            <person name="McLeod M.P."/>
            <person name="McPherson D."/>
            <person name="Merkulov G."/>
            <person name="Milshina N.V."/>
            <person name="Mobarry C."/>
            <person name="Morris J."/>
            <person name="Moshrefi A."/>
            <person name="Mount S.M."/>
            <person name="Moy M."/>
            <person name="Murphy B."/>
            <person name="Murphy L."/>
            <person name="Muzny D.M."/>
            <person name="Nelson D.L."/>
            <person name="Nelson D.R."/>
            <person name="Nelson K.A."/>
            <person name="Nixon K."/>
            <person name="Nusskern D.R."/>
            <person name="Pacleb J.M."/>
            <person name="Palazzolo M."/>
            <person name="Pittman G.S."/>
            <person name="Pan S."/>
            <person name="Pollard J."/>
            <person name="Puri V."/>
            <person name="Reese M.G."/>
            <person name="Reinert K."/>
            <person name="Remington K."/>
            <person name="Saunders R.D.C."/>
            <person name="Scheeler F."/>
            <person name="Shen H."/>
            <person name="Shue B.C."/>
            <person name="Siden-Kiamos I."/>
            <person name="Simpson M."/>
            <person name="Skupski M.P."/>
            <person name="Smith T.J."/>
            <person name="Spier E."/>
            <person name="Spradling A.C."/>
            <person name="Stapleton M."/>
            <person name="Strong R."/>
            <person name="Sun E."/>
            <person name="Svirskas R."/>
            <person name="Tector C."/>
            <person name="Turner R."/>
            <person name="Venter E."/>
            <person name="Wang A.H."/>
            <person name="Wang X."/>
            <person name="Wang Z.-Y."/>
            <person name="Wassarman D.A."/>
            <person name="Weinstock G.M."/>
            <person name="Weissenbach J."/>
            <person name="Williams S.M."/>
            <person name="Woodage T."/>
            <person name="Worley K.C."/>
            <person name="Wu D."/>
            <person name="Yang S."/>
            <person name="Yao Q.A."/>
            <person name="Ye J."/>
            <person name="Yeh R.-F."/>
            <person name="Zaveri J.S."/>
            <person name="Zhan M."/>
            <person name="Zhang G."/>
            <person name="Zhao Q."/>
            <person name="Zheng L."/>
            <person name="Zheng X.H."/>
            <person name="Zhong F.N."/>
            <person name="Zhong W."/>
            <person name="Zhou X."/>
            <person name="Zhu S.C."/>
            <person name="Zhu X."/>
            <person name="Smith H.O."/>
            <person name="Gibbs R.A."/>
            <person name="Myers E.W."/>
            <person name="Rubin G.M."/>
            <person name="Venter J.C."/>
        </authorList>
    </citation>
    <scope>NUCLEOTIDE SEQUENCE [LARGE SCALE GENOMIC DNA]</scope>
    <source>
        <strain>Berkeley</strain>
    </source>
</reference>
<reference key="3">
    <citation type="journal article" date="2002" name="Genome Biol.">
        <title>Annotation of the Drosophila melanogaster euchromatic genome: a systematic review.</title>
        <authorList>
            <person name="Misra S."/>
            <person name="Crosby M.A."/>
            <person name="Mungall C.J."/>
            <person name="Matthews B.B."/>
            <person name="Campbell K.S."/>
            <person name="Hradecky P."/>
            <person name="Huang Y."/>
            <person name="Kaminker J.S."/>
            <person name="Millburn G.H."/>
            <person name="Prochnik S.E."/>
            <person name="Smith C.D."/>
            <person name="Tupy J.L."/>
            <person name="Whitfield E.J."/>
            <person name="Bayraktaroglu L."/>
            <person name="Berman B.P."/>
            <person name="Bettencourt B.R."/>
            <person name="Celniker S.E."/>
            <person name="de Grey A.D.N.J."/>
            <person name="Drysdale R.A."/>
            <person name="Harris N.L."/>
            <person name="Richter J."/>
            <person name="Russo S."/>
            <person name="Schroeder A.J."/>
            <person name="Shu S.Q."/>
            <person name="Stapleton M."/>
            <person name="Yamada C."/>
            <person name="Ashburner M."/>
            <person name="Gelbart W.M."/>
            <person name="Rubin G.M."/>
            <person name="Lewis S.E."/>
        </authorList>
    </citation>
    <scope>GENOME REANNOTATION</scope>
    <source>
        <strain>Berkeley</strain>
    </source>
</reference>
<reference key="4">
    <citation type="journal article" date="2002" name="Genome Biol.">
        <title>A Drosophila full-length cDNA resource.</title>
        <authorList>
            <person name="Stapleton M."/>
            <person name="Carlson J.W."/>
            <person name="Brokstein P."/>
            <person name="Yu C."/>
            <person name="Champe M."/>
            <person name="George R.A."/>
            <person name="Guarin H."/>
            <person name="Kronmiller B."/>
            <person name="Pacleb J.M."/>
            <person name="Park S."/>
            <person name="Wan K.H."/>
            <person name="Rubin G.M."/>
            <person name="Celniker S.E."/>
        </authorList>
    </citation>
    <scope>NUCLEOTIDE SEQUENCE [LARGE SCALE MRNA]</scope>
    <source>
        <strain>Berkeley</strain>
        <tissue>Embryo</tissue>
    </source>
</reference>
<reference key="5">
    <citation type="journal article" date="2008" name="J. Proteome Res.">
        <title>Phosphoproteome analysis of Drosophila melanogaster embryos.</title>
        <authorList>
            <person name="Zhai B."/>
            <person name="Villen J."/>
            <person name="Beausoleil S.A."/>
            <person name="Mintseris J."/>
            <person name="Gygi S.P."/>
        </authorList>
    </citation>
    <scope>PHOSPHORYLATION [LARGE SCALE ANALYSIS] AT TYR-237</scope>
    <scope>IDENTIFICATION BY MASS SPECTROMETRY</scope>
    <source>
        <tissue>Embryo</tissue>
    </source>
</reference>
<reference key="6">
    <citation type="journal article" date="2017" name="Nucleic Acids Res.">
        <title>Piwi interacts with chromatin at nuclear pores and promiscuously binds nuclear transcripts in Drosophila ovarian somatic cells.</title>
        <authorList>
            <person name="Ilyin A.A."/>
            <person name="Ryazansky S.S."/>
            <person name="Doronin S.A."/>
            <person name="Olenkina O.M."/>
            <person name="Mikhaleva E.A."/>
            <person name="Yakushev E.Y."/>
            <person name="Abramov Y.A."/>
            <person name="Belyakin S.N."/>
            <person name="Ivankin A.V."/>
            <person name="Pindyurin A.V."/>
            <person name="Gvozdev V.A."/>
            <person name="Klenov M.S."/>
            <person name="Shevelyov Y.Y."/>
        </authorList>
    </citation>
    <scope>INTERACTION WITH PIWI</scope>
    <scope>SUBCELLULAR LOCATION</scope>
    <scope>TISSUE SPECIFICITY</scope>
</reference>
<reference key="7">
    <citation type="journal article" date="2018" name="Acta Naturae">
        <title>Zinc Finger Protein CG9890 - New Component of ENY2-Containing Complexes of Drosophila.</title>
        <authorList>
            <person name="Fursova N.A."/>
            <person name="Nikolenko J.V."/>
            <person name="Soshnikova N.V."/>
            <person name="Mazina M.Y."/>
            <person name="Vorobyova N.E."/>
            <person name="Krasnov A.N."/>
        </authorList>
    </citation>
    <scope>INTERACTION WITH CG9890</scope>
</reference>
<proteinExistence type="evidence at protein level"/>
<feature type="chain" id="PRO_0000310562" description="THO complex subunit 5">
    <location>
        <begin position="1"/>
        <end position="616"/>
    </location>
</feature>
<feature type="modified residue" description="Phosphotyrosine" evidence="3">
    <location>
        <position position="237"/>
    </location>
</feature>
<dbReference type="EMBL" id="AJ620304">
    <property type="protein sequence ID" value="CAF04333.1"/>
    <property type="molecule type" value="mRNA"/>
</dbReference>
<dbReference type="EMBL" id="AE013599">
    <property type="protein sequence ID" value="AAF47114.2"/>
    <property type="molecule type" value="Genomic_DNA"/>
</dbReference>
<dbReference type="EMBL" id="AY061305">
    <property type="protein sequence ID" value="AAL28853.1"/>
    <property type="molecule type" value="mRNA"/>
</dbReference>
<dbReference type="RefSeq" id="NP_611856.1">
    <property type="nucleotide sequence ID" value="NM_138012.3"/>
</dbReference>
<dbReference type="SMR" id="Q9W1F4"/>
<dbReference type="BioGRID" id="63400">
    <property type="interactions" value="25"/>
</dbReference>
<dbReference type="ComplexPortal" id="CPX-2261">
    <property type="entry name" value="TREX transcription-export complex"/>
</dbReference>
<dbReference type="FunCoup" id="Q9W1F4">
    <property type="interactions" value="1750"/>
</dbReference>
<dbReference type="IntAct" id="Q9W1F4">
    <property type="interactions" value="3"/>
</dbReference>
<dbReference type="STRING" id="7227.FBpp0072056"/>
<dbReference type="TCDB" id="3.A.22.1.3">
    <property type="family name" value="the transcription-coupled trex/tap nuclear mrna export complex (trex) family"/>
</dbReference>
<dbReference type="iPTMnet" id="Q9W1F4"/>
<dbReference type="PaxDb" id="7227-FBpp0072056"/>
<dbReference type="DNASU" id="37810"/>
<dbReference type="EnsemblMetazoa" id="FBtr0072147">
    <property type="protein sequence ID" value="FBpp0072056"/>
    <property type="gene ID" value="FBgn0034939"/>
</dbReference>
<dbReference type="GeneID" id="37810"/>
<dbReference type="KEGG" id="dme:Dmel_CG2980"/>
<dbReference type="UCSC" id="CG2980-RA">
    <property type="organism name" value="d. melanogaster"/>
</dbReference>
<dbReference type="AGR" id="FB:FBgn0034939"/>
<dbReference type="CTD" id="8563"/>
<dbReference type="FlyBase" id="FBgn0034939">
    <property type="gene designation" value="thoc5"/>
</dbReference>
<dbReference type="VEuPathDB" id="VectorBase:FBgn0034939"/>
<dbReference type="eggNOG" id="KOG2216">
    <property type="taxonomic scope" value="Eukaryota"/>
</dbReference>
<dbReference type="GeneTree" id="ENSGT00390000013777"/>
<dbReference type="HOGENOM" id="CLU_023759_0_0_1"/>
<dbReference type="InParanoid" id="Q9W1F4"/>
<dbReference type="OMA" id="EAYCDIV"/>
<dbReference type="OrthoDB" id="20582at2759"/>
<dbReference type="PhylomeDB" id="Q9W1F4"/>
<dbReference type="Reactome" id="R-DME-159236">
    <property type="pathway name" value="Transport of Mature mRNA derived from an Intron-Containing Transcript"/>
</dbReference>
<dbReference type="Reactome" id="R-DME-72187">
    <property type="pathway name" value="mRNA 3'-end processing"/>
</dbReference>
<dbReference type="Reactome" id="R-DME-73856">
    <property type="pathway name" value="RNA Polymerase II Transcription Termination"/>
</dbReference>
<dbReference type="SignaLink" id="Q9W1F4"/>
<dbReference type="BioGRID-ORCS" id="37810">
    <property type="hits" value="0 hits in 1 CRISPR screen"/>
</dbReference>
<dbReference type="GenomeRNAi" id="37810"/>
<dbReference type="PRO" id="PR:Q9W1F4"/>
<dbReference type="Proteomes" id="UP000000803">
    <property type="component" value="Chromosome 2R"/>
</dbReference>
<dbReference type="Bgee" id="FBgn0034939">
    <property type="expression patterns" value="Expressed in eye disc (Drosophila) and 61 other cell types or tissues"/>
</dbReference>
<dbReference type="GO" id="GO:0005737">
    <property type="term" value="C:cytoplasm"/>
    <property type="evidence" value="ECO:0007669"/>
    <property type="project" value="UniProtKB-SubCell"/>
</dbReference>
<dbReference type="GO" id="GO:0031965">
    <property type="term" value="C:nuclear membrane"/>
    <property type="evidence" value="ECO:0007669"/>
    <property type="project" value="UniProtKB-SubCell"/>
</dbReference>
<dbReference type="GO" id="GO:0005634">
    <property type="term" value="C:nucleus"/>
    <property type="evidence" value="ECO:0000314"/>
    <property type="project" value="UniProtKB"/>
</dbReference>
<dbReference type="GO" id="GO:0032991">
    <property type="term" value="C:protein-containing complex"/>
    <property type="evidence" value="ECO:0000353"/>
    <property type="project" value="FlyBase"/>
</dbReference>
<dbReference type="GO" id="GO:0000347">
    <property type="term" value="C:THO complex"/>
    <property type="evidence" value="ECO:0000314"/>
    <property type="project" value="UniProtKB"/>
</dbReference>
<dbReference type="GO" id="GO:0000445">
    <property type="term" value="C:THO complex part of transcription export complex"/>
    <property type="evidence" value="ECO:0000318"/>
    <property type="project" value="GO_Central"/>
</dbReference>
<dbReference type="GO" id="GO:0000346">
    <property type="term" value="C:transcription export complex"/>
    <property type="evidence" value="ECO:0000250"/>
    <property type="project" value="FlyBase"/>
</dbReference>
<dbReference type="GO" id="GO:0003729">
    <property type="term" value="F:mRNA binding"/>
    <property type="evidence" value="ECO:0000318"/>
    <property type="project" value="GO_Central"/>
</dbReference>
<dbReference type="GO" id="GO:0043021">
    <property type="term" value="F:ribonucleoprotein complex binding"/>
    <property type="evidence" value="ECO:0000314"/>
    <property type="project" value="UniProtKB"/>
</dbReference>
<dbReference type="GO" id="GO:0007140">
    <property type="term" value="P:male meiotic nuclear division"/>
    <property type="evidence" value="ECO:0000315"/>
    <property type="project" value="FlyBase"/>
</dbReference>
<dbReference type="GO" id="GO:0006406">
    <property type="term" value="P:mRNA export from nucleus"/>
    <property type="evidence" value="ECO:0000318"/>
    <property type="project" value="GO_Central"/>
</dbReference>
<dbReference type="GO" id="GO:0031990">
    <property type="term" value="P:mRNA export from nucleus in response to heat stress"/>
    <property type="evidence" value="ECO:0000305"/>
    <property type="project" value="FlyBase"/>
</dbReference>
<dbReference type="InterPro" id="IPR038765">
    <property type="entry name" value="Papain-like_cys_pep_sf"/>
</dbReference>
<dbReference type="InterPro" id="IPR019163">
    <property type="entry name" value="THO_Thoc5"/>
</dbReference>
<dbReference type="PANTHER" id="PTHR13375">
    <property type="entry name" value="FMS INTERACTING PROTEIN"/>
    <property type="match status" value="1"/>
</dbReference>
<dbReference type="PANTHER" id="PTHR13375:SF3">
    <property type="entry name" value="THO COMPLEX SUBUNIT 5 HOMOLOG"/>
    <property type="match status" value="1"/>
</dbReference>
<dbReference type="Pfam" id="PF09766">
    <property type="entry name" value="FmiP_Thoc5"/>
    <property type="match status" value="1"/>
</dbReference>
<dbReference type="SUPFAM" id="SSF54001">
    <property type="entry name" value="Cysteine proteinases"/>
    <property type="match status" value="1"/>
</dbReference>
<comment type="function">
    <text evidence="2">The THO complex is required for cell proliferation and for proper export of heat-shock mRNAs under heat stress.</text>
</comment>
<comment type="subunit">
    <text evidence="2 4 5">Component of the THO complex, composed of at least e(y)2, HPR1, THO2, THOC5, THOC6 and THOC7 (PubMed:15133499). Interacts with piwi; the interaction might be partly RNA-mediated (PubMed:28472469). Interacts with CG9890 (PubMed:30713769).</text>
</comment>
<comment type="subcellular location">
    <subcellularLocation>
        <location evidence="1">Nucleus</location>
    </subcellularLocation>
    <subcellularLocation>
        <location evidence="1">Cytoplasm</location>
    </subcellularLocation>
    <subcellularLocation>
        <location evidence="4">Nucleus membrane</location>
    </subcellularLocation>
    <text evidence="1">Shuttles between nucleus and cytoplasm.</text>
</comment>
<comment type="tissue specificity">
    <text evidence="4">Expressed in ovaries (at protein level).</text>
</comment>
<comment type="similarity">
    <text evidence="6">Belongs to the THOC5 family.</text>
</comment>
<accession>Q9W1F4</accession>
<accession>Q95RL0</accession>
<protein>
    <recommendedName>
        <fullName>THO complex subunit 5</fullName>
    </recommendedName>
</protein>